<proteinExistence type="inferred from homology"/>
<organism>
    <name type="scientific">Legionella pneumophila subsp. pneumophila (strain Philadelphia 1 / ATCC 33152 / DSM 7513)</name>
    <dbReference type="NCBI Taxonomy" id="272624"/>
    <lineage>
        <taxon>Bacteria</taxon>
        <taxon>Pseudomonadati</taxon>
        <taxon>Pseudomonadota</taxon>
        <taxon>Gammaproteobacteria</taxon>
        <taxon>Legionellales</taxon>
        <taxon>Legionellaceae</taxon>
        <taxon>Legionella</taxon>
    </lineage>
</organism>
<accession>Q5ZUC1</accession>
<dbReference type="EC" id="3.6.1.7"/>
<dbReference type="EMBL" id="AE017354">
    <property type="protein sequence ID" value="AAU27956.1"/>
    <property type="molecule type" value="Genomic_DNA"/>
</dbReference>
<dbReference type="RefSeq" id="WP_010947603.1">
    <property type="nucleotide sequence ID" value="NC_002942.5"/>
</dbReference>
<dbReference type="RefSeq" id="YP_095903.1">
    <property type="nucleotide sequence ID" value="NC_002942.5"/>
</dbReference>
<dbReference type="SMR" id="Q5ZUC1"/>
<dbReference type="STRING" id="272624.lpg1886"/>
<dbReference type="PaxDb" id="272624-lpg1886"/>
<dbReference type="KEGG" id="lpn:lpg1886"/>
<dbReference type="PATRIC" id="fig|272624.6.peg.1969"/>
<dbReference type="eggNOG" id="COG1254">
    <property type="taxonomic scope" value="Bacteria"/>
</dbReference>
<dbReference type="HOGENOM" id="CLU_141932_1_0_6"/>
<dbReference type="OrthoDB" id="5295388at2"/>
<dbReference type="Proteomes" id="UP000000609">
    <property type="component" value="Chromosome"/>
</dbReference>
<dbReference type="GO" id="GO:0003998">
    <property type="term" value="F:acylphosphatase activity"/>
    <property type="evidence" value="ECO:0007669"/>
    <property type="project" value="UniProtKB-EC"/>
</dbReference>
<dbReference type="Gene3D" id="3.30.70.100">
    <property type="match status" value="1"/>
</dbReference>
<dbReference type="InterPro" id="IPR020456">
    <property type="entry name" value="Acylphosphatase"/>
</dbReference>
<dbReference type="InterPro" id="IPR001792">
    <property type="entry name" value="Acylphosphatase-like_dom"/>
</dbReference>
<dbReference type="InterPro" id="IPR036046">
    <property type="entry name" value="Acylphosphatase-like_dom_sf"/>
</dbReference>
<dbReference type="InterPro" id="IPR017968">
    <property type="entry name" value="Acylphosphatase_CS"/>
</dbReference>
<dbReference type="NCBIfam" id="NF011022">
    <property type="entry name" value="PRK14451.1"/>
    <property type="match status" value="1"/>
</dbReference>
<dbReference type="PANTHER" id="PTHR47268">
    <property type="entry name" value="ACYLPHOSPHATASE"/>
    <property type="match status" value="1"/>
</dbReference>
<dbReference type="PANTHER" id="PTHR47268:SF4">
    <property type="entry name" value="ACYLPHOSPHATASE"/>
    <property type="match status" value="1"/>
</dbReference>
<dbReference type="Pfam" id="PF00708">
    <property type="entry name" value="Acylphosphatase"/>
    <property type="match status" value="1"/>
</dbReference>
<dbReference type="SUPFAM" id="SSF54975">
    <property type="entry name" value="Acylphosphatase/BLUF domain-like"/>
    <property type="match status" value="1"/>
</dbReference>
<dbReference type="PROSITE" id="PS00150">
    <property type="entry name" value="ACYLPHOSPHATASE_1"/>
    <property type="match status" value="1"/>
</dbReference>
<dbReference type="PROSITE" id="PS00151">
    <property type="entry name" value="ACYLPHOSPHATASE_2"/>
    <property type="match status" value="1"/>
</dbReference>
<dbReference type="PROSITE" id="PS51160">
    <property type="entry name" value="ACYLPHOSPHATASE_3"/>
    <property type="match status" value="1"/>
</dbReference>
<evidence type="ECO:0000255" key="1">
    <source>
        <dbReference type="PROSITE-ProRule" id="PRU00520"/>
    </source>
</evidence>
<evidence type="ECO:0000305" key="2"/>
<reference key="1">
    <citation type="journal article" date="2004" name="Science">
        <title>The genomic sequence of the accidental pathogen Legionella pneumophila.</title>
        <authorList>
            <person name="Chien M."/>
            <person name="Morozova I."/>
            <person name="Shi S."/>
            <person name="Sheng H."/>
            <person name="Chen J."/>
            <person name="Gomez S.M."/>
            <person name="Asamani G."/>
            <person name="Hill K."/>
            <person name="Nuara J."/>
            <person name="Feder M."/>
            <person name="Rineer J."/>
            <person name="Greenberg J.J."/>
            <person name="Steshenko V."/>
            <person name="Park S.H."/>
            <person name="Zhao B."/>
            <person name="Teplitskaya E."/>
            <person name="Edwards J.R."/>
            <person name="Pampou S."/>
            <person name="Georghiou A."/>
            <person name="Chou I.-C."/>
            <person name="Iannuccilli W."/>
            <person name="Ulz M.E."/>
            <person name="Kim D.H."/>
            <person name="Geringer-Sameth A."/>
            <person name="Goldsberry C."/>
            <person name="Morozov P."/>
            <person name="Fischer S.G."/>
            <person name="Segal G."/>
            <person name="Qu X."/>
            <person name="Rzhetsky A."/>
            <person name="Zhang P."/>
            <person name="Cayanis E."/>
            <person name="De Jong P.J."/>
            <person name="Ju J."/>
            <person name="Kalachikov S."/>
            <person name="Shuman H.A."/>
            <person name="Russo J.J."/>
        </authorList>
    </citation>
    <scope>NUCLEOTIDE SEQUENCE [LARGE SCALE GENOMIC DNA]</scope>
    <source>
        <strain>Philadelphia 1 / ATCC 33152 / DSM 7513</strain>
    </source>
</reference>
<sequence length="91" mass="10568">MTKELCMRCYISGRVQGVWFRASAKNLAEQLMISGWARNLADGRVEVFACGKEDKLEEFYTWLQKGPLNARVDVCTRENLPWEDYISFDVL</sequence>
<protein>
    <recommendedName>
        <fullName>Acylphosphatase</fullName>
        <ecNumber>3.6.1.7</ecNumber>
    </recommendedName>
    <alternativeName>
        <fullName>Acylphosphate phosphohydrolase</fullName>
    </alternativeName>
</protein>
<feature type="chain" id="PRO_0000326735" description="Acylphosphatase">
    <location>
        <begin position="1"/>
        <end position="91"/>
    </location>
</feature>
<feature type="domain" description="Acylphosphatase-like" evidence="1">
    <location>
        <begin position="6"/>
        <end position="91"/>
    </location>
</feature>
<feature type="active site" evidence="1">
    <location>
        <position position="21"/>
    </location>
</feature>
<feature type="active site" evidence="1">
    <location>
        <position position="39"/>
    </location>
</feature>
<name>ACYP_LEGPH</name>
<comment type="catalytic activity">
    <reaction>
        <text>an acyl phosphate + H2O = a carboxylate + phosphate + H(+)</text>
        <dbReference type="Rhea" id="RHEA:14965"/>
        <dbReference type="ChEBI" id="CHEBI:15377"/>
        <dbReference type="ChEBI" id="CHEBI:15378"/>
        <dbReference type="ChEBI" id="CHEBI:29067"/>
        <dbReference type="ChEBI" id="CHEBI:43474"/>
        <dbReference type="ChEBI" id="CHEBI:59918"/>
        <dbReference type="EC" id="3.6.1.7"/>
    </reaction>
</comment>
<comment type="similarity">
    <text evidence="2">Belongs to the acylphosphatase family.</text>
</comment>
<gene>
    <name type="primary">acyP</name>
    <name type="ordered locus">lpg1886</name>
</gene>
<keyword id="KW-0378">Hydrolase</keyword>
<keyword id="KW-1185">Reference proteome</keyword>